<protein>
    <recommendedName>
        <fullName>Aminoacyltransferase FemA</fullName>
        <ecNumber>2.3.2.17</ecNumber>
    </recommendedName>
    <alternativeName>
        <fullName>Factor essential for expression of methicillin resistance A</fullName>
    </alternativeName>
    <alternativeName>
        <fullName>N-acetylmuramoyl-L-alanyl-D-glutamyl-L-lysyl-(N6-glycyl)-D-alanyl-D-alanine-diphosphoundecaprenyl-N-acetylglucosamine:glycine glycyltransferase</fullName>
    </alternativeName>
</protein>
<feature type="chain" id="PRO_0000232603" description="Aminoacyltransferase FemA">
    <location>
        <begin position="1"/>
        <end position="417"/>
    </location>
</feature>
<accession>Q8CPA9</accession>
<sequence>MKFTNLTAKEFSDFTDRMTYSHFTQMEGNYELKVAEGTESHLVGIKNNDNEVIAACLLTAVPVMKIFKYFYSNRGPVIDYNNKELVHFFFNELSKYVKKYNCLYLRVDPYLPYQYLNHEGEITGNAGHDWIFDELESLGYKHEGFHKGFDPVLQIRYHSVLNLANKSANDVLKNMDGLRKRNTKKVKKNGVKVRFLSEEELPIFRSFMEDTSETKDFADREDSFYYNRFKHYKDRVLVPLAYINFDEYIEELNNERNVLNKDYNKALKDIEKRPENKKAHNKKENLEQQLDANQQKINEAKNLKQEHGNELPISAGFFIINPFEVVYYAGGTSNRYRHFAGSYAVQWKMINYAIEHGINRYNFYGISGDFSEDAEDAGVVKFKKGYDADVIEYVGDFIKPINKPMYNIYRTLKKLKK</sequence>
<gene>
    <name type="primary">femA</name>
    <name type="ordered locus">SE_1057</name>
</gene>
<name>FEMA_STAES</name>
<dbReference type="EC" id="2.3.2.17"/>
<dbReference type="EMBL" id="AE015929">
    <property type="protein sequence ID" value="AAO04654.1"/>
    <property type="molecule type" value="Genomic_DNA"/>
</dbReference>
<dbReference type="RefSeq" id="NP_764612.1">
    <property type="nucleotide sequence ID" value="NC_004461.1"/>
</dbReference>
<dbReference type="RefSeq" id="WP_001830979.1">
    <property type="nucleotide sequence ID" value="NZ_WBME01000002.1"/>
</dbReference>
<dbReference type="SMR" id="Q8CPA9"/>
<dbReference type="KEGG" id="sep:SE_1057"/>
<dbReference type="PATRIC" id="fig|176280.10.peg.1033"/>
<dbReference type="eggNOG" id="COG2348">
    <property type="taxonomic scope" value="Bacteria"/>
</dbReference>
<dbReference type="HOGENOM" id="CLU_048411_1_0_9"/>
<dbReference type="OrthoDB" id="2173585at2"/>
<dbReference type="Proteomes" id="UP000001411">
    <property type="component" value="Chromosome"/>
</dbReference>
<dbReference type="GO" id="GO:0005737">
    <property type="term" value="C:cytoplasm"/>
    <property type="evidence" value="ECO:0007669"/>
    <property type="project" value="UniProtKB-SubCell"/>
</dbReference>
<dbReference type="GO" id="GO:0016755">
    <property type="term" value="F:aminoacyltransferase activity"/>
    <property type="evidence" value="ECO:0007669"/>
    <property type="project" value="InterPro"/>
</dbReference>
<dbReference type="GO" id="GO:0000166">
    <property type="term" value="F:nucleotide binding"/>
    <property type="evidence" value="ECO:0007669"/>
    <property type="project" value="InterPro"/>
</dbReference>
<dbReference type="GO" id="GO:0071555">
    <property type="term" value="P:cell wall organization"/>
    <property type="evidence" value="ECO:0007669"/>
    <property type="project" value="UniProtKB-KW"/>
</dbReference>
<dbReference type="GO" id="GO:0009252">
    <property type="term" value="P:peptidoglycan biosynthetic process"/>
    <property type="evidence" value="ECO:0007669"/>
    <property type="project" value="UniProtKB-KW"/>
</dbReference>
<dbReference type="GO" id="GO:0008360">
    <property type="term" value="P:regulation of cell shape"/>
    <property type="evidence" value="ECO:0007669"/>
    <property type="project" value="UniProtKB-KW"/>
</dbReference>
<dbReference type="Gene3D" id="1.20.58.90">
    <property type="match status" value="1"/>
</dbReference>
<dbReference type="Gene3D" id="3.40.630.30">
    <property type="match status" value="2"/>
</dbReference>
<dbReference type="InterPro" id="IPR016181">
    <property type="entry name" value="Acyl_CoA_acyltransferase"/>
</dbReference>
<dbReference type="InterPro" id="IPR003447">
    <property type="entry name" value="FEMABX"/>
</dbReference>
<dbReference type="InterPro" id="IPR050644">
    <property type="entry name" value="PG_Glycine_Bridge_Synth"/>
</dbReference>
<dbReference type="InterPro" id="IPR010978">
    <property type="entry name" value="tRNA-bd_arm"/>
</dbReference>
<dbReference type="PANTHER" id="PTHR36174:SF2">
    <property type="entry name" value="AMINOACYLTRANSFERASE FEMA"/>
    <property type="match status" value="1"/>
</dbReference>
<dbReference type="PANTHER" id="PTHR36174">
    <property type="entry name" value="LIPID II:GLYCINE GLYCYLTRANSFERASE"/>
    <property type="match status" value="1"/>
</dbReference>
<dbReference type="Pfam" id="PF02388">
    <property type="entry name" value="FemAB"/>
    <property type="match status" value="1"/>
</dbReference>
<dbReference type="SUPFAM" id="SSF55729">
    <property type="entry name" value="Acyl-CoA N-acyltransferases (Nat)"/>
    <property type="match status" value="2"/>
</dbReference>
<dbReference type="SUPFAM" id="SSF46589">
    <property type="entry name" value="tRNA-binding arm"/>
    <property type="match status" value="1"/>
</dbReference>
<dbReference type="PROSITE" id="PS51191">
    <property type="entry name" value="FEMABX"/>
    <property type="match status" value="1"/>
</dbReference>
<reference key="1">
    <citation type="journal article" date="2003" name="Mol. Microbiol.">
        <title>Genome-based analysis of virulence genes in a non-biofilm-forming Staphylococcus epidermidis strain (ATCC 12228).</title>
        <authorList>
            <person name="Zhang Y.-Q."/>
            <person name="Ren S.-X."/>
            <person name="Li H.-L."/>
            <person name="Wang Y.-X."/>
            <person name="Fu G."/>
            <person name="Yang J."/>
            <person name="Qin Z.-Q."/>
            <person name="Miao Y.-G."/>
            <person name="Wang W.-Y."/>
            <person name="Chen R.-S."/>
            <person name="Shen Y."/>
            <person name="Chen Z."/>
            <person name="Yuan Z.-H."/>
            <person name="Zhao G.-P."/>
            <person name="Qu D."/>
            <person name="Danchin A."/>
            <person name="Wen Y.-M."/>
        </authorList>
    </citation>
    <scope>NUCLEOTIDE SEQUENCE [LARGE SCALE GENOMIC DNA]</scope>
    <source>
        <strain>ATCC 12228 / FDA PCI 1200</strain>
    </source>
</reference>
<evidence type="ECO:0000250" key="1"/>
<evidence type="ECO:0000305" key="2"/>
<comment type="function">
    <text evidence="1">Catalyzes the incorporation of amino acid(s) into the interchain peptide bridge of peptidoglycan, using aminoacyl-tRNA as amino acid donor.</text>
</comment>
<comment type="catalytic activity">
    <reaction>
        <text>beta-D-GlcNAc-(1-&gt;4)-Mur2Ac(oyl-L-Ala-D-isoglutaminyl-L-Lys-(N(6)-Gly)-D-Ala-D-Ala)-di-trans,octa-cis-undecaprenyl diphosphate + 2 glycyl-tRNA(Gly) = MurNAc-L-Ala-D-isoglutaminyl-L-Lys-(N(6)-tri-Gly)-D-Ala-D-Ala-diphospho-di-trans,octa-cis-undecaprenyl-GlcNAc + 2 tRNA(Gly) + 2 H(+)</text>
        <dbReference type="Rhea" id="RHEA:30439"/>
        <dbReference type="Rhea" id="RHEA-COMP:9664"/>
        <dbReference type="Rhea" id="RHEA-COMP:9683"/>
        <dbReference type="ChEBI" id="CHEBI:15378"/>
        <dbReference type="ChEBI" id="CHEBI:62234"/>
        <dbReference type="ChEBI" id="CHEBI:62235"/>
        <dbReference type="ChEBI" id="CHEBI:78442"/>
        <dbReference type="ChEBI" id="CHEBI:78522"/>
        <dbReference type="EC" id="2.3.2.17"/>
    </reaction>
</comment>
<comment type="subcellular location">
    <subcellularLocation>
        <location evidence="1">Cytoplasm</location>
    </subcellularLocation>
</comment>
<comment type="similarity">
    <text evidence="2">Belongs to the FemABX family.</text>
</comment>
<proteinExistence type="inferred from homology"/>
<keyword id="KW-0012">Acyltransferase</keyword>
<keyword id="KW-0133">Cell shape</keyword>
<keyword id="KW-0961">Cell wall biogenesis/degradation</keyword>
<keyword id="KW-0963">Cytoplasm</keyword>
<keyword id="KW-0573">Peptidoglycan synthesis</keyword>
<keyword id="KW-0808">Transferase</keyword>
<organism>
    <name type="scientific">Staphylococcus epidermidis (strain ATCC 12228 / FDA PCI 1200)</name>
    <dbReference type="NCBI Taxonomy" id="176280"/>
    <lineage>
        <taxon>Bacteria</taxon>
        <taxon>Bacillati</taxon>
        <taxon>Bacillota</taxon>
        <taxon>Bacilli</taxon>
        <taxon>Bacillales</taxon>
        <taxon>Staphylococcaceae</taxon>
        <taxon>Staphylococcus</taxon>
    </lineage>
</organism>